<gene>
    <name type="primary">sgo-1</name>
    <name type="ORF">B23G1.060</name>
    <name type="ORF">NCU01842</name>
</gene>
<comment type="function">
    <text evidence="1">Plays a central role in chromosome cohesion during cell division by preventing premature dissociation of cohesin complex from centromeres after prophase, when most of cohesin complex dissociates from chromosomes arms.</text>
</comment>
<comment type="subcellular location">
    <subcellularLocation>
        <location evidence="1">Nucleus</location>
    </subcellularLocation>
    <subcellularLocation>
        <location evidence="1">Chromosome</location>
        <location evidence="1">Centromere</location>
    </subcellularLocation>
</comment>
<comment type="similarity">
    <text evidence="4">Belongs to the shugoshin family.</text>
</comment>
<protein>
    <recommendedName>
        <fullName>Shugoshin</fullName>
    </recommendedName>
</protein>
<sequence length="774" mass="84750">MARLNEQAMSSVALSTDNLELLRRKFLRQNRDIARVNSTQSLRIRGLENECARLLSENLELRGQVLRLEKELQDNAARRVADHALEVKAKMETQLAELSSLLASLGEPPSKRRLSEERRYAQPRPSVHRSPPLRRARQEADQELLAEQEGRLPPIYENKTYARATMNSEEILALCMQADDSNDSPDIGPPPVSRFVEDDMVIPCSPSPNKNAEAEETETTEQVEESPRALQVPPSLSPPKLDYDRRPNMILFSPPKESRVAEPSKMFSPPPMEPPKQSTSAVPSETIRAGLKRKLNGDNQNEPNKATKLQQGKENGNETGIKKGLSARDPHKRKSIKETATKPRAPLSAKSTNEHIVSPKKPAKPHQVADDFKPVKVHKASKGKEKVDLPAPDKKSAVEETQGNSTSAFTKVEILPPALEPTPEVAEIPETDILITPGTPERASESTVVTHDTPPPAHISSNGETSRPSRRARAAISYTEPNLRDKMRRPTKELFDAVSGEGKFLHRPTSQQQQQQRKGDESAPTSVSKVKVEPSPAVDISSLTSSALFEKEKEKEPQPDEGILSPNGILPSSVDLGRRRRASSFSTAAPAMTIPSVQEQSTLNLPAADETDENAAVEAQIQKELSNSITTRPRGGKGRQSMSRSVPTIPTENYEHEDAQLSTNSASVDLYDFASCASPDSAAPQLEATTGDVPVNKKAPKGSRRASSAASTETTATASAKPRSSRKRASMLVPKKSLWAEELAQEEEDEEDVGNDSGGSLSKGRASRRRSMML</sequence>
<organism>
    <name type="scientific">Neurospora crassa (strain ATCC 24698 / 74-OR23-1A / CBS 708.71 / DSM 1257 / FGSC 987)</name>
    <dbReference type="NCBI Taxonomy" id="367110"/>
    <lineage>
        <taxon>Eukaryota</taxon>
        <taxon>Fungi</taxon>
        <taxon>Dikarya</taxon>
        <taxon>Ascomycota</taxon>
        <taxon>Pezizomycotina</taxon>
        <taxon>Sordariomycetes</taxon>
        <taxon>Sordariomycetidae</taxon>
        <taxon>Sordariales</taxon>
        <taxon>Sordariaceae</taxon>
        <taxon>Neurospora</taxon>
    </lineage>
</organism>
<proteinExistence type="inferred from homology"/>
<evidence type="ECO:0000250" key="1"/>
<evidence type="ECO:0000255" key="2"/>
<evidence type="ECO:0000256" key="3">
    <source>
        <dbReference type="SAM" id="MobiDB-lite"/>
    </source>
</evidence>
<evidence type="ECO:0000305" key="4"/>
<reference key="1">
    <citation type="journal article" date="2003" name="Nucleic Acids Res.">
        <title>What's in the genome of a filamentous fungus? Analysis of the Neurospora genome sequence.</title>
        <authorList>
            <person name="Mannhaupt G."/>
            <person name="Montrone C."/>
            <person name="Haase D."/>
            <person name="Mewes H.-W."/>
            <person name="Aign V."/>
            <person name="Hoheisel J.D."/>
            <person name="Fartmann B."/>
            <person name="Nyakatura G."/>
            <person name="Kempken F."/>
            <person name="Maier J."/>
            <person name="Schulte U."/>
        </authorList>
    </citation>
    <scope>NUCLEOTIDE SEQUENCE [LARGE SCALE GENOMIC DNA]</scope>
    <source>
        <strain>ATCC 24698 / 74-OR23-1A / CBS 708.71 / DSM 1257 / FGSC 987</strain>
    </source>
</reference>
<reference key="2">
    <citation type="journal article" date="2003" name="Nature">
        <title>The genome sequence of the filamentous fungus Neurospora crassa.</title>
        <authorList>
            <person name="Galagan J.E."/>
            <person name="Calvo S.E."/>
            <person name="Borkovich K.A."/>
            <person name="Selker E.U."/>
            <person name="Read N.D."/>
            <person name="Jaffe D.B."/>
            <person name="FitzHugh W."/>
            <person name="Ma L.-J."/>
            <person name="Smirnov S."/>
            <person name="Purcell S."/>
            <person name="Rehman B."/>
            <person name="Elkins T."/>
            <person name="Engels R."/>
            <person name="Wang S."/>
            <person name="Nielsen C.B."/>
            <person name="Butler J."/>
            <person name="Endrizzi M."/>
            <person name="Qui D."/>
            <person name="Ianakiev P."/>
            <person name="Bell-Pedersen D."/>
            <person name="Nelson M.A."/>
            <person name="Werner-Washburne M."/>
            <person name="Selitrennikoff C.P."/>
            <person name="Kinsey J.A."/>
            <person name="Braun E.L."/>
            <person name="Zelter A."/>
            <person name="Schulte U."/>
            <person name="Kothe G.O."/>
            <person name="Jedd G."/>
            <person name="Mewes H.-W."/>
            <person name="Staben C."/>
            <person name="Marcotte E."/>
            <person name="Greenberg D."/>
            <person name="Roy A."/>
            <person name="Foley K."/>
            <person name="Naylor J."/>
            <person name="Stange-Thomann N."/>
            <person name="Barrett R."/>
            <person name="Gnerre S."/>
            <person name="Kamal M."/>
            <person name="Kamvysselis M."/>
            <person name="Mauceli E.W."/>
            <person name="Bielke C."/>
            <person name="Rudd S."/>
            <person name="Frishman D."/>
            <person name="Krystofova S."/>
            <person name="Rasmussen C."/>
            <person name="Metzenberg R.L."/>
            <person name="Perkins D.D."/>
            <person name="Kroken S."/>
            <person name="Cogoni C."/>
            <person name="Macino G."/>
            <person name="Catcheside D.E.A."/>
            <person name="Li W."/>
            <person name="Pratt R.J."/>
            <person name="Osmani S.A."/>
            <person name="DeSouza C.P.C."/>
            <person name="Glass N.L."/>
            <person name="Orbach M.J."/>
            <person name="Berglund J.A."/>
            <person name="Voelker R."/>
            <person name="Yarden O."/>
            <person name="Plamann M."/>
            <person name="Seiler S."/>
            <person name="Dunlap J.C."/>
            <person name="Radford A."/>
            <person name="Aramayo R."/>
            <person name="Natvig D.O."/>
            <person name="Alex L.A."/>
            <person name="Mannhaupt G."/>
            <person name="Ebbole D.J."/>
            <person name="Freitag M."/>
            <person name="Paulsen I."/>
            <person name="Sachs M.S."/>
            <person name="Lander E.S."/>
            <person name="Nusbaum C."/>
            <person name="Birren B.W."/>
        </authorList>
    </citation>
    <scope>NUCLEOTIDE SEQUENCE [LARGE SCALE GENOMIC DNA]</scope>
    <source>
        <strain>ATCC 24698 / 74-OR23-1A / CBS 708.71 / DSM 1257 / FGSC 987</strain>
    </source>
</reference>
<keyword id="KW-0131">Cell cycle</keyword>
<keyword id="KW-0132">Cell division</keyword>
<keyword id="KW-0137">Centromere</keyword>
<keyword id="KW-0158">Chromosome</keyword>
<keyword id="KW-0159">Chromosome partition</keyword>
<keyword id="KW-0175">Coiled coil</keyword>
<keyword id="KW-0539">Nucleus</keyword>
<keyword id="KW-1185">Reference proteome</keyword>
<feature type="chain" id="PRO_0000055449" description="Shugoshin">
    <location>
        <begin position="1"/>
        <end position="774"/>
    </location>
</feature>
<feature type="region of interest" description="Disordered" evidence="3">
    <location>
        <begin position="106"/>
        <end position="151"/>
    </location>
</feature>
<feature type="region of interest" description="Disordered" evidence="3">
    <location>
        <begin position="205"/>
        <end position="661"/>
    </location>
</feature>
<feature type="region of interest" description="Disordered" evidence="3">
    <location>
        <begin position="676"/>
        <end position="774"/>
    </location>
</feature>
<feature type="coiled-coil region" evidence="2">
    <location>
        <begin position="41"/>
        <end position="105"/>
    </location>
</feature>
<feature type="compositionally biased region" description="Basic and acidic residues" evidence="3">
    <location>
        <begin position="109"/>
        <end position="120"/>
    </location>
</feature>
<feature type="compositionally biased region" description="Acidic residues" evidence="3">
    <location>
        <begin position="214"/>
        <end position="224"/>
    </location>
</feature>
<feature type="compositionally biased region" description="Polar residues" evidence="3">
    <location>
        <begin position="297"/>
        <end position="318"/>
    </location>
</feature>
<feature type="compositionally biased region" description="Basic and acidic residues" evidence="3">
    <location>
        <begin position="382"/>
        <end position="398"/>
    </location>
</feature>
<feature type="compositionally biased region" description="Polar residues" evidence="3">
    <location>
        <begin position="399"/>
        <end position="409"/>
    </location>
</feature>
<feature type="compositionally biased region" description="Basic and acidic residues" evidence="3">
    <location>
        <begin position="482"/>
        <end position="495"/>
    </location>
</feature>
<feature type="compositionally biased region" description="Basic and acidic residues" evidence="3">
    <location>
        <begin position="549"/>
        <end position="558"/>
    </location>
</feature>
<feature type="compositionally biased region" description="Polar residues" evidence="3">
    <location>
        <begin position="595"/>
        <end position="604"/>
    </location>
</feature>
<feature type="compositionally biased region" description="Polar residues" evidence="3">
    <location>
        <begin position="640"/>
        <end position="651"/>
    </location>
</feature>
<feature type="compositionally biased region" description="Low complexity" evidence="3">
    <location>
        <begin position="706"/>
        <end position="722"/>
    </location>
</feature>
<feature type="compositionally biased region" description="Acidic residues" evidence="3">
    <location>
        <begin position="743"/>
        <end position="754"/>
    </location>
</feature>
<feature type="compositionally biased region" description="Basic residues" evidence="3">
    <location>
        <begin position="765"/>
        <end position="774"/>
    </location>
</feature>
<name>SGO1_NEUCR</name>
<dbReference type="EMBL" id="BX284754">
    <property type="protein sequence ID" value="CAD70468.1"/>
    <property type="molecule type" value="Genomic_DNA"/>
</dbReference>
<dbReference type="EMBL" id="CM002237">
    <property type="protein sequence ID" value="EAA27390.1"/>
    <property type="molecule type" value="Genomic_DNA"/>
</dbReference>
<dbReference type="RefSeq" id="XP_956626.1">
    <property type="nucleotide sequence ID" value="XM_951533.2"/>
</dbReference>
<dbReference type="SMR" id="Q872U8"/>
<dbReference type="STRING" id="367110.Q872U8"/>
<dbReference type="PaxDb" id="5141-EFNCRP00000001736"/>
<dbReference type="EnsemblFungi" id="EAA27390">
    <property type="protein sequence ID" value="EAA27390"/>
    <property type="gene ID" value="NCU01842"/>
</dbReference>
<dbReference type="GeneID" id="3872773"/>
<dbReference type="KEGG" id="ncr:NCU01842"/>
<dbReference type="VEuPathDB" id="FungiDB:NCU01842"/>
<dbReference type="HOGENOM" id="CLU_013723_1_0_1"/>
<dbReference type="InParanoid" id="Q872U8"/>
<dbReference type="OrthoDB" id="5394106at2759"/>
<dbReference type="Proteomes" id="UP000001805">
    <property type="component" value="Chromosome 6, Linkage Group II"/>
</dbReference>
<dbReference type="GO" id="GO:0000779">
    <property type="term" value="C:condensed chromosome, centromeric region"/>
    <property type="evidence" value="ECO:0007669"/>
    <property type="project" value="UniProtKB-ARBA"/>
</dbReference>
<dbReference type="GO" id="GO:0005634">
    <property type="term" value="C:nucleus"/>
    <property type="evidence" value="ECO:0000318"/>
    <property type="project" value="GO_Central"/>
</dbReference>
<dbReference type="GO" id="GO:0051301">
    <property type="term" value="P:cell division"/>
    <property type="evidence" value="ECO:0007669"/>
    <property type="project" value="UniProtKB-KW"/>
</dbReference>
<dbReference type="GO" id="GO:0006325">
    <property type="term" value="P:chromatin organization"/>
    <property type="evidence" value="ECO:0000318"/>
    <property type="project" value="GO_Central"/>
</dbReference>
<dbReference type="GO" id="GO:0045132">
    <property type="term" value="P:meiotic chromosome segregation"/>
    <property type="evidence" value="ECO:0007669"/>
    <property type="project" value="InterPro"/>
</dbReference>
<dbReference type="InterPro" id="IPR011515">
    <property type="entry name" value="Shugoshin_C"/>
</dbReference>
<dbReference type="InterPro" id="IPR011516">
    <property type="entry name" value="Shugoshin_N"/>
</dbReference>
<dbReference type="Pfam" id="PF07557">
    <property type="entry name" value="Shugoshin_C"/>
    <property type="match status" value="1"/>
</dbReference>
<dbReference type="Pfam" id="PF07558">
    <property type="entry name" value="Shugoshin_N"/>
    <property type="match status" value="1"/>
</dbReference>
<accession>Q872U8</accession>
<accession>Q1K569</accession>